<name>ATP5H_BOVIN</name>
<reference key="1">
    <citation type="journal article" date="1987" name="J. Mol. Biol.">
        <title>ATP synthase from bovine mitochondria. The characterization and sequence analysis of two membrane-associated sub-units and of the corresponding cDNAs.</title>
        <authorList>
            <person name="Walker J.E."/>
            <person name="Runswick M.J."/>
            <person name="Poulter L."/>
        </authorList>
    </citation>
    <scope>NUCLEOTIDE SEQUENCE [MRNA]</scope>
    <scope>ACETYLATION AT ALA-2</scope>
    <scope>PROTEIN SEQUENCE OF 2-161</scope>
</reference>
<reference key="2">
    <citation type="submission" date="2005-09" db="EMBL/GenBank/DDBJ databases">
        <authorList>
            <consortium name="NIH - Mammalian Gene Collection (MGC) project"/>
        </authorList>
    </citation>
    <scope>NUCLEOTIDE SEQUENCE [LARGE SCALE MRNA]</scope>
    <source>
        <strain>Hereford</strain>
        <tissue>Hypothalamus</tissue>
    </source>
</reference>
<reference key="3">
    <citation type="journal article" date="2007" name="FEBS Lett.">
        <title>Association of two proteolipids of unknown function with ATP synthase from bovine heart mitochondria.</title>
        <authorList>
            <person name="Chen R."/>
            <person name="Runswick M.J."/>
            <person name="Carroll J."/>
            <person name="Fearnley I.M."/>
            <person name="Walker J.E."/>
        </authorList>
    </citation>
    <scope>IDENTIFICATION IN THE ATP SYNTHASE COMPLEX</scope>
</reference>
<reference key="4">
    <citation type="journal article" date="2015" name="J. Biol. Chem.">
        <title>Organization of Subunits in the Membrane Domain of the Bovine F-ATPase Revealed by Covalent Cross-linking.</title>
        <authorList>
            <person name="Lee J."/>
            <person name="Ding S."/>
            <person name="Walpole T.B."/>
            <person name="Holding A.N."/>
            <person name="Montgomery M.G."/>
            <person name="Fearnley I.M."/>
            <person name="Walker J.E."/>
        </authorList>
    </citation>
    <scope>IDENTIFICATION IN THE ATP SYNTHASE COMPLEX</scope>
</reference>
<accession>P13620</accession>
<accession>Q3SX10</accession>
<feature type="initiator methionine" description="Removed" evidence="6">
    <location>
        <position position="1"/>
    </location>
</feature>
<feature type="chain" id="PRO_0000071672" description="ATP synthase peripheral stalk subunit d, mitochondrial">
    <location>
        <begin position="2"/>
        <end position="161"/>
    </location>
</feature>
<feature type="modified residue" description="N-acetylalanine" evidence="6">
    <location>
        <position position="2"/>
    </location>
</feature>
<feature type="modified residue" description="N6-acetyllysine" evidence="3">
    <location>
        <position position="32"/>
    </location>
</feature>
<feature type="modified residue" description="N6-acetyllysine" evidence="3">
    <location>
        <position position="48"/>
    </location>
</feature>
<feature type="modified residue" description="N6-acetyllysine" evidence="3">
    <location>
        <position position="63"/>
    </location>
</feature>
<feature type="modified residue" description="N6-acetyllysine" evidence="3">
    <location>
        <position position="72"/>
    </location>
</feature>
<feature type="modified residue" description="N6-acetyllysine; alternate" evidence="3">
    <location>
        <position position="78"/>
    </location>
</feature>
<feature type="modified residue" description="N6-succinyllysine; alternate" evidence="3">
    <location>
        <position position="78"/>
    </location>
</feature>
<feature type="modified residue" description="N6-acetyllysine; alternate" evidence="3">
    <location>
        <position position="85"/>
    </location>
</feature>
<feature type="modified residue" description="N6-succinyllysine; alternate" evidence="3">
    <location>
        <position position="85"/>
    </location>
</feature>
<feature type="modified residue" description="N6-acetyllysine; alternate" evidence="3">
    <location>
        <position position="95"/>
    </location>
</feature>
<feature type="modified residue" description="N6-succinyllysine; alternate" evidence="3">
    <location>
        <position position="95"/>
    </location>
</feature>
<feature type="modified residue" description="N6-acetyllysine" evidence="1">
    <location>
        <position position="117"/>
    </location>
</feature>
<feature type="modified residue" description="N6-acetyllysine; alternate" evidence="3">
    <location>
        <position position="144"/>
    </location>
</feature>
<feature type="modified residue" description="N6-succinyllysine; alternate" evidence="3">
    <location>
        <position position="144"/>
    </location>
</feature>
<feature type="modified residue" description="N6-acetyllysine; alternate" evidence="3">
    <location>
        <position position="149"/>
    </location>
</feature>
<feature type="modified residue" description="N6-succinyllysine; alternate" evidence="3">
    <location>
        <position position="149"/>
    </location>
</feature>
<feature type="helix" evidence="9">
    <location>
        <begin position="13"/>
        <end position="17"/>
    </location>
</feature>
<feature type="helix" evidence="9">
    <location>
        <begin position="22"/>
        <end position="24"/>
    </location>
</feature>
<feature type="helix" evidence="9">
    <location>
        <begin position="25"/>
        <end position="44"/>
    </location>
</feature>
<feature type="helix" evidence="9">
    <location>
        <begin position="54"/>
        <end position="59"/>
    </location>
</feature>
<feature type="helix" evidence="9">
    <location>
        <begin position="66"/>
        <end position="74"/>
    </location>
</feature>
<feature type="helix" evidence="9">
    <location>
        <begin position="89"/>
        <end position="99"/>
    </location>
</feature>
<feature type="helix" evidence="9">
    <location>
        <begin position="101"/>
        <end position="122"/>
    </location>
</feature>
<feature type="turn" evidence="10">
    <location>
        <begin position="128"/>
        <end position="130"/>
    </location>
</feature>
<feature type="helix" evidence="10">
    <location>
        <begin position="133"/>
        <end position="139"/>
    </location>
</feature>
<feature type="helix" evidence="10">
    <location>
        <begin position="141"/>
        <end position="143"/>
    </location>
</feature>
<feature type="turn" evidence="10">
    <location>
        <begin position="147"/>
        <end position="149"/>
    </location>
</feature>
<keyword id="KW-0002">3D-structure</keyword>
<keyword id="KW-0007">Acetylation</keyword>
<keyword id="KW-0138">CF(0)</keyword>
<keyword id="KW-0903">Direct protein sequencing</keyword>
<keyword id="KW-0375">Hydrogen ion transport</keyword>
<keyword id="KW-0406">Ion transport</keyword>
<keyword id="KW-0472">Membrane</keyword>
<keyword id="KW-0496">Mitochondrion</keyword>
<keyword id="KW-0999">Mitochondrion inner membrane</keyword>
<keyword id="KW-1185">Reference proteome</keyword>
<keyword id="KW-0813">Transport</keyword>
<evidence type="ECO:0000250" key="1">
    <source>
        <dbReference type="UniProtKB" id="O75947"/>
    </source>
</evidence>
<evidence type="ECO:0000250" key="2">
    <source>
        <dbReference type="UniProtKB" id="P19483"/>
    </source>
</evidence>
<evidence type="ECO:0000250" key="3">
    <source>
        <dbReference type="UniProtKB" id="Q9DCX2"/>
    </source>
</evidence>
<evidence type="ECO:0000269" key="4">
    <source>
    </source>
</evidence>
<evidence type="ECO:0000269" key="5">
    <source>
    </source>
</evidence>
<evidence type="ECO:0000269" key="6">
    <source>
    </source>
</evidence>
<evidence type="ECO:0000305" key="7"/>
<evidence type="ECO:0000305" key="8">
    <source>
    </source>
</evidence>
<evidence type="ECO:0007829" key="9">
    <source>
        <dbReference type="PDB" id="2CLY"/>
    </source>
</evidence>
<evidence type="ECO:0007829" key="10">
    <source>
        <dbReference type="PDB" id="6YY0"/>
    </source>
</evidence>
<protein>
    <recommendedName>
        <fullName evidence="1">ATP synthase peripheral stalk subunit d, mitochondrial</fullName>
        <shortName>ATPase subunit d</shortName>
    </recommendedName>
    <alternativeName>
        <fullName evidence="7">ATP synthase peripheral stalk subunit d</fullName>
    </alternativeName>
</protein>
<proteinExistence type="evidence at protein level"/>
<comment type="function">
    <text evidence="1 2 8">Subunit d, of the mitochondrial membrane ATP synthase complex (F(1)F(0) ATP synthase or Complex V) that produces ATP from ADP in the presence of a proton gradient across the membrane which is generated by electron transport complexes of the respiratory chain. ATP synthase complex consist of a soluble F(1) head domain - the catalytic core - and a membrane F(1) domain - the membrane proton channel. These two domains are linked by a central stalk rotating inside the F(1) region and a stationary peripheral stalk. During catalysis, ATP synthesis in the catalytic domain of F(1) is coupled via a rotary mechanism of the central stalk subunits to proton translocation (By similarity). In vivo, can only synthesize ATP although its ATP hydrolase activity can be activated artificially in vitro (By similarity). Part of the complex F(0) domain (By similarity). Part of the complex F(0) domain and the peripheric stalk, which acts as a stator to hold the catalytic alpha(3)beta(3) subcomplex and subunit a/ATP6 static relative to the rotary elements (Probable).</text>
</comment>
<comment type="subunit">
    <text evidence="1 3 4 5">Component of the ATP synthase complex composed at least of ATP5F1A/subunit alpha, ATP5F1B/subunit beta, ATP5MC1/subunit c (homooctomer), MT-ATP6/subunit a, MT-ATP8/subunit 8, ATP5ME/subunit e, ATP5MF/subunit f, ATP5MG/subunit g, ATP5MK/subunit k, ATP5MJ/subunit j, ATP5F1C/subunit gamma, ATP5F1D/subunit delta, ATP5F1E/subunit epsilon, ATP5PF/subunit F6, ATP5PB/subunit b, ATP5PD/subunit d, ATP5PO/subunit OSCP (PubMed:17570365, PubMed:25851905). ATP synthase complex consists of a soluble F(1) head domain (subunits alpha(3) and beta(3)) - the catalytic core - and a membrane F(0) domain - the membrane proton channel (subunits c, a, 8, e, f, g, k and j). These two domains are linked by a central stalk (subunits gamma, delta, and epsilon) rotating inside the F1 region and a stationary peripheral stalk (subunits F6, b, d, and OSCP) (By similarity). Interacts with FLVCR2; this interaction occurs in the absence of heme and is disrupted upon heme binding (By similarity).</text>
</comment>
<comment type="subcellular location">
    <subcellularLocation>
        <location>Mitochondrion</location>
    </subcellularLocation>
    <subcellularLocation>
        <location>Mitochondrion inner membrane</location>
    </subcellularLocation>
</comment>
<comment type="similarity">
    <text evidence="7">Belongs to the ATPase d subunit family.</text>
</comment>
<organism>
    <name type="scientific">Bos taurus</name>
    <name type="common">Bovine</name>
    <dbReference type="NCBI Taxonomy" id="9913"/>
    <lineage>
        <taxon>Eukaryota</taxon>
        <taxon>Metazoa</taxon>
        <taxon>Chordata</taxon>
        <taxon>Craniata</taxon>
        <taxon>Vertebrata</taxon>
        <taxon>Euteleostomi</taxon>
        <taxon>Mammalia</taxon>
        <taxon>Eutheria</taxon>
        <taxon>Laurasiatheria</taxon>
        <taxon>Artiodactyla</taxon>
        <taxon>Ruminantia</taxon>
        <taxon>Pecora</taxon>
        <taxon>Bovidae</taxon>
        <taxon>Bovinae</taxon>
        <taxon>Bos</taxon>
    </lineage>
</organism>
<gene>
    <name evidence="1" type="primary">ATP5PD</name>
    <name type="synonym">ATP5H</name>
</gene>
<dbReference type="EMBL" id="X06089">
    <property type="protein sequence ID" value="CAA29473.1"/>
    <property type="molecule type" value="mRNA"/>
</dbReference>
<dbReference type="EMBL" id="BC104564">
    <property type="protein sequence ID" value="AAI04565.1"/>
    <property type="molecule type" value="mRNA"/>
</dbReference>
<dbReference type="PIR" id="S00764">
    <property type="entry name" value="S00764"/>
</dbReference>
<dbReference type="RefSeq" id="NP_777149.1">
    <property type="nucleotide sequence ID" value="NM_174724.4"/>
</dbReference>
<dbReference type="RefSeq" id="XP_024835411.1">
    <property type="nucleotide sequence ID" value="XM_024979643.2"/>
</dbReference>
<dbReference type="RefSeq" id="XP_024835412.1">
    <property type="nucleotide sequence ID" value="XM_024979644.2"/>
</dbReference>
<dbReference type="PDB" id="2CLY">
    <property type="method" value="X-ray"/>
    <property type="resolution" value="2.80 A"/>
    <property type="chains" value="B/E=2-161"/>
</dbReference>
<dbReference type="PDB" id="2WSS">
    <property type="method" value="X-ray"/>
    <property type="resolution" value="3.20 A"/>
    <property type="chains" value="U=2-119"/>
</dbReference>
<dbReference type="PDB" id="4B2Q">
    <property type="method" value="EM"/>
    <property type="resolution" value="37.00 A"/>
    <property type="chains" value="U/u=5-124"/>
</dbReference>
<dbReference type="PDB" id="5ARA">
    <property type="method" value="EM"/>
    <property type="resolution" value="6.70 A"/>
    <property type="chains" value="U=2-125"/>
</dbReference>
<dbReference type="PDB" id="5ARE">
    <property type="method" value="EM"/>
    <property type="resolution" value="7.40 A"/>
    <property type="chains" value="U=2-125"/>
</dbReference>
<dbReference type="PDB" id="5ARH">
    <property type="method" value="EM"/>
    <property type="resolution" value="7.20 A"/>
    <property type="chains" value="U=2-125"/>
</dbReference>
<dbReference type="PDB" id="5ARI">
    <property type="method" value="EM"/>
    <property type="resolution" value="7.40 A"/>
    <property type="chains" value="U=2-125"/>
</dbReference>
<dbReference type="PDB" id="5FIJ">
    <property type="method" value="EM"/>
    <property type="resolution" value="7.40 A"/>
    <property type="chains" value="U=2-125"/>
</dbReference>
<dbReference type="PDB" id="5FIK">
    <property type="method" value="EM"/>
    <property type="resolution" value="6.40 A"/>
    <property type="chains" value="U=2-125"/>
</dbReference>
<dbReference type="PDB" id="5FIL">
    <property type="method" value="EM"/>
    <property type="resolution" value="7.10 A"/>
    <property type="chains" value="U=2-125"/>
</dbReference>
<dbReference type="PDB" id="6YY0">
    <property type="method" value="EM"/>
    <property type="resolution" value="3.23 A"/>
    <property type="chains" value="d=2-161"/>
</dbReference>
<dbReference type="PDB" id="6ZBB">
    <property type="method" value="EM"/>
    <property type="resolution" value="3.61 A"/>
    <property type="chains" value="d=2-161"/>
</dbReference>
<dbReference type="PDB" id="6ZIQ">
    <property type="method" value="EM"/>
    <property type="resolution" value="4.33 A"/>
    <property type="chains" value="d=2-161"/>
</dbReference>
<dbReference type="PDB" id="6ZIT">
    <property type="method" value="EM"/>
    <property type="resolution" value="3.49 A"/>
    <property type="chains" value="d=2-161"/>
</dbReference>
<dbReference type="PDB" id="6ZIU">
    <property type="method" value="EM"/>
    <property type="resolution" value="6.02 A"/>
    <property type="chains" value="d=2-161"/>
</dbReference>
<dbReference type="PDB" id="6ZPO">
    <property type="method" value="EM"/>
    <property type="resolution" value="4.00 A"/>
    <property type="chains" value="d=2-161"/>
</dbReference>
<dbReference type="PDB" id="6ZQM">
    <property type="method" value="EM"/>
    <property type="resolution" value="3.29 A"/>
    <property type="chains" value="d=2-161"/>
</dbReference>
<dbReference type="PDB" id="6ZQN">
    <property type="method" value="EM"/>
    <property type="resolution" value="4.00 A"/>
    <property type="chains" value="d=2-161"/>
</dbReference>
<dbReference type="PDB" id="7AJB">
    <property type="method" value="EM"/>
    <property type="resolution" value="9.20 A"/>
    <property type="chains" value="Ad/d=2-161"/>
</dbReference>
<dbReference type="PDB" id="7AJC">
    <property type="method" value="EM"/>
    <property type="resolution" value="11.90 A"/>
    <property type="chains" value="Ad/d=2-161"/>
</dbReference>
<dbReference type="PDB" id="7AJD">
    <property type="method" value="EM"/>
    <property type="resolution" value="9.00 A"/>
    <property type="chains" value="Ad/d=2-161"/>
</dbReference>
<dbReference type="PDB" id="7AJE">
    <property type="method" value="EM"/>
    <property type="resolution" value="9.40 A"/>
    <property type="chains" value="Ad/d=2-161"/>
</dbReference>
<dbReference type="PDB" id="7AJF">
    <property type="method" value="EM"/>
    <property type="resolution" value="8.45 A"/>
    <property type="chains" value="Ad/d=2-161"/>
</dbReference>
<dbReference type="PDB" id="7AJG">
    <property type="method" value="EM"/>
    <property type="resolution" value="10.70 A"/>
    <property type="chains" value="Ad/d=2-161"/>
</dbReference>
<dbReference type="PDB" id="7AJH">
    <property type="method" value="EM"/>
    <property type="resolution" value="9.70 A"/>
    <property type="chains" value="Ad/d=2-161"/>
</dbReference>
<dbReference type="PDB" id="7AJI">
    <property type="method" value="EM"/>
    <property type="resolution" value="11.40 A"/>
    <property type="chains" value="Ad/d=2-161"/>
</dbReference>
<dbReference type="PDB" id="7AJJ">
    <property type="method" value="EM"/>
    <property type="resolution" value="13.10 A"/>
    <property type="chains" value="Ad/d=2-161"/>
</dbReference>
<dbReference type="PDBsum" id="2CLY"/>
<dbReference type="PDBsum" id="2WSS"/>
<dbReference type="PDBsum" id="4B2Q"/>
<dbReference type="PDBsum" id="5ARA"/>
<dbReference type="PDBsum" id="5ARE"/>
<dbReference type="PDBsum" id="5ARH"/>
<dbReference type="PDBsum" id="5ARI"/>
<dbReference type="PDBsum" id="5FIJ"/>
<dbReference type="PDBsum" id="5FIK"/>
<dbReference type="PDBsum" id="5FIL"/>
<dbReference type="PDBsum" id="6YY0"/>
<dbReference type="PDBsum" id="6ZBB"/>
<dbReference type="PDBsum" id="6ZIQ"/>
<dbReference type="PDBsum" id="6ZIT"/>
<dbReference type="PDBsum" id="6ZIU"/>
<dbReference type="PDBsum" id="6ZPO"/>
<dbReference type="PDBsum" id="6ZQM"/>
<dbReference type="PDBsum" id="6ZQN"/>
<dbReference type="PDBsum" id="7AJB"/>
<dbReference type="PDBsum" id="7AJC"/>
<dbReference type="PDBsum" id="7AJD"/>
<dbReference type="PDBsum" id="7AJE"/>
<dbReference type="PDBsum" id="7AJF"/>
<dbReference type="PDBsum" id="7AJG"/>
<dbReference type="PDBsum" id="7AJH"/>
<dbReference type="PDBsum" id="7AJI"/>
<dbReference type="PDBsum" id="7AJJ"/>
<dbReference type="EMDB" id="EMD-11001"/>
<dbReference type="EMDB" id="EMD-11149"/>
<dbReference type="EMDB" id="EMD-11228"/>
<dbReference type="EMDB" id="EMD-11229"/>
<dbReference type="EMDB" id="EMD-11230"/>
<dbReference type="EMDB" id="EMD-11342"/>
<dbReference type="EMDB" id="EMD-11368"/>
<dbReference type="EMDB" id="EMD-11369"/>
<dbReference type="EMDB" id="EMD-11428"/>
<dbReference type="EMDB" id="EMD-11429"/>
<dbReference type="EMDB" id="EMD-11430"/>
<dbReference type="SMR" id="P13620"/>
<dbReference type="CORUM" id="P13620"/>
<dbReference type="DIP" id="DIP-39020N"/>
<dbReference type="FunCoup" id="P13620">
    <property type="interactions" value="2616"/>
</dbReference>
<dbReference type="IntAct" id="P13620">
    <property type="interactions" value="2"/>
</dbReference>
<dbReference type="MINT" id="P13620"/>
<dbReference type="STRING" id="9913.ENSBTAP00000068634"/>
<dbReference type="GlyGen" id="P13620">
    <property type="glycosylation" value="1 site, 1 O-linked glycan (1 site)"/>
</dbReference>
<dbReference type="iPTMnet" id="P13620"/>
<dbReference type="PaxDb" id="9913-ENSBTAP00000028282"/>
<dbReference type="PeptideAtlas" id="P13620"/>
<dbReference type="Ensembl" id="ENSBTAT00000028282.4">
    <property type="protein sequence ID" value="ENSBTAP00000028282.2"/>
    <property type="gene ID" value="ENSBTAG00000021227.4"/>
</dbReference>
<dbReference type="GeneID" id="282710"/>
<dbReference type="KEGG" id="bta:282710"/>
<dbReference type="CTD" id="10476"/>
<dbReference type="VEuPathDB" id="HostDB:ENSBTAG00000021227"/>
<dbReference type="VGNC" id="VGNC:97244">
    <property type="gene designation" value="ATP5PD"/>
</dbReference>
<dbReference type="eggNOG" id="KOG3366">
    <property type="taxonomic scope" value="Eukaryota"/>
</dbReference>
<dbReference type="GeneTree" id="ENSGT00390000003582"/>
<dbReference type="HOGENOM" id="CLU_130600_0_0_1"/>
<dbReference type="InParanoid" id="P13620"/>
<dbReference type="OMA" id="VSKGRWA"/>
<dbReference type="OrthoDB" id="35799at2759"/>
<dbReference type="TreeFam" id="TF314031"/>
<dbReference type="Reactome" id="R-BTA-163210">
    <property type="pathway name" value="Formation of ATP by chemiosmotic coupling"/>
</dbReference>
<dbReference type="Reactome" id="R-BTA-8949613">
    <property type="pathway name" value="Cristae formation"/>
</dbReference>
<dbReference type="Reactome" id="R-BTA-9837999">
    <property type="pathway name" value="Mitochondrial protein degradation"/>
</dbReference>
<dbReference type="EvolutionaryTrace" id="P13620"/>
<dbReference type="Proteomes" id="UP000009136">
    <property type="component" value="Chromosome 19"/>
</dbReference>
<dbReference type="Bgee" id="ENSBTAG00000021227">
    <property type="expression patterns" value="Expressed in tongue muscle and 104 other cell types or tissues"/>
</dbReference>
<dbReference type="GO" id="GO:0005743">
    <property type="term" value="C:mitochondrial inner membrane"/>
    <property type="evidence" value="ECO:0007669"/>
    <property type="project" value="UniProtKB-SubCell"/>
</dbReference>
<dbReference type="GO" id="GO:0005739">
    <property type="term" value="C:mitochondrion"/>
    <property type="evidence" value="ECO:0000305"/>
    <property type="project" value="UniProtKB"/>
</dbReference>
<dbReference type="GO" id="GO:0045259">
    <property type="term" value="C:proton-transporting ATP synthase complex"/>
    <property type="evidence" value="ECO:0000314"/>
    <property type="project" value="UniProtKB"/>
</dbReference>
<dbReference type="GO" id="GO:0046933">
    <property type="term" value="F:proton-transporting ATP synthase activity, rotational mechanism"/>
    <property type="evidence" value="ECO:0007669"/>
    <property type="project" value="Ensembl"/>
</dbReference>
<dbReference type="GO" id="GO:0015986">
    <property type="term" value="P:proton motive force-driven ATP synthesis"/>
    <property type="evidence" value="ECO:0000318"/>
    <property type="project" value="GO_Central"/>
</dbReference>
<dbReference type="GO" id="GO:0042776">
    <property type="term" value="P:proton motive force-driven mitochondrial ATP synthesis"/>
    <property type="evidence" value="ECO:0007669"/>
    <property type="project" value="Ensembl"/>
</dbReference>
<dbReference type="Gene3D" id="6.10.280.70">
    <property type="match status" value="1"/>
</dbReference>
<dbReference type="InterPro" id="IPR008689">
    <property type="entry name" value="ATP_synth_F0_dsu_mt"/>
</dbReference>
<dbReference type="InterPro" id="IPR036228">
    <property type="entry name" value="ATP_synth_F0_dsu_sf_mt"/>
</dbReference>
<dbReference type="PANTHER" id="PTHR12700">
    <property type="entry name" value="ATP SYNTHASE SUBUNIT D, MITOCHONDRIAL"/>
    <property type="match status" value="1"/>
</dbReference>
<dbReference type="Pfam" id="PF05873">
    <property type="entry name" value="Mt_ATP-synt_D"/>
    <property type="match status" value="1"/>
</dbReference>
<dbReference type="PIRSF" id="PIRSF005514">
    <property type="entry name" value="ATPase_F0_D_mt"/>
    <property type="match status" value="1"/>
</dbReference>
<dbReference type="SUPFAM" id="SSF161065">
    <property type="entry name" value="ATP synthase D chain-like"/>
    <property type="match status" value="1"/>
</dbReference>
<sequence length="161" mass="18692">MAGRKLALKTIDWVAFGEIIPRNQKAVANSLKSWNETLTSRLATLPEKPPAIDWAYYKANVAKAGLVDDFEKKFNALKVPIPEDKYTAQVDAEEKEDVKSCAEFLTQSKTRIQEYEKELEKMRNIIPFDQMTIEDLNEVFPETKLDKKKYPYWPHRPIETL</sequence>